<accession>A9W6S6</accession>
<comment type="function">
    <text evidence="1">Transfers the gamma-phosphate of ATP to the 4'-position of a tetraacyldisaccharide 1-phosphate intermediate (termed DS-1-P) to form tetraacyldisaccharide 1,4'-bis-phosphate (lipid IVA).</text>
</comment>
<comment type="catalytic activity">
    <reaction evidence="1">
        <text>a lipid A disaccharide + ATP = a lipid IVA + ADP + H(+)</text>
        <dbReference type="Rhea" id="RHEA:67840"/>
        <dbReference type="ChEBI" id="CHEBI:15378"/>
        <dbReference type="ChEBI" id="CHEBI:30616"/>
        <dbReference type="ChEBI" id="CHEBI:176343"/>
        <dbReference type="ChEBI" id="CHEBI:176425"/>
        <dbReference type="ChEBI" id="CHEBI:456216"/>
        <dbReference type="EC" id="2.7.1.130"/>
    </reaction>
</comment>
<comment type="pathway">
    <text evidence="1">Glycolipid biosynthesis; lipid IV(A) biosynthesis; lipid IV(A) from (3R)-3-hydroxytetradecanoyl-[acyl-carrier-protein] and UDP-N-acetyl-alpha-D-glucosamine: step 6/6.</text>
</comment>
<comment type="similarity">
    <text evidence="1">Belongs to the LpxK family.</text>
</comment>
<reference key="1">
    <citation type="submission" date="2007-12" db="EMBL/GenBank/DDBJ databases">
        <title>Complete sequence of Methylobacterium extorquens PA1.</title>
        <authorList>
            <consortium name="US DOE Joint Genome Institute"/>
            <person name="Copeland A."/>
            <person name="Lucas S."/>
            <person name="Lapidus A."/>
            <person name="Barry K."/>
            <person name="Glavina del Rio T."/>
            <person name="Dalin E."/>
            <person name="Tice H."/>
            <person name="Pitluck S."/>
            <person name="Saunders E."/>
            <person name="Brettin T."/>
            <person name="Bruce D."/>
            <person name="Detter J.C."/>
            <person name="Han C."/>
            <person name="Schmutz J."/>
            <person name="Larimer F."/>
            <person name="Land M."/>
            <person name="Hauser L."/>
            <person name="Kyrpides N."/>
            <person name="Kim E."/>
            <person name="Marx C."/>
            <person name="Richardson P."/>
        </authorList>
    </citation>
    <scope>NUCLEOTIDE SEQUENCE [LARGE SCALE GENOMIC DNA]</scope>
    <source>
        <strain>PA1</strain>
    </source>
</reference>
<protein>
    <recommendedName>
        <fullName evidence="1">Tetraacyldisaccharide 4'-kinase</fullName>
        <ecNumber evidence="1">2.7.1.130</ecNumber>
    </recommendedName>
    <alternativeName>
        <fullName evidence="1">Lipid A 4'-kinase</fullName>
    </alternativeName>
</protein>
<sequence>MRPPGFWSRPPTHPLARLLAPAGRVYGGLTANRMDRPGATPPCPVLCVGNFTLGGAGKTPTALSLVRLLRELGRTPALLSRGYGGRLAGPLVVDPARHAAAEVGDEPLLLAQAAPTIVARDRPAGARLCAASGADVIVMDDGLQNPSLTKTLSLAVVDGGAGLGNGLPFPAGPLRAPLARQWPHVAGLVLVGEGGPGEAMAAEAERRGLPVHRARLVPETGSDWAGRRVVAFAGIGRPQKFFETLRSLGAEIVAEGAFPDHHPYRPGDWTALSALAAREGASLVTTEKDAVRLPAEARAVVDVLRVTLAFANETRLRQQLAAAFPHA</sequence>
<gene>
    <name evidence="1" type="primary">lpxK</name>
    <name type="ordered locus">Mext_2969</name>
</gene>
<keyword id="KW-0067">ATP-binding</keyword>
<keyword id="KW-0418">Kinase</keyword>
<keyword id="KW-0441">Lipid A biosynthesis</keyword>
<keyword id="KW-0444">Lipid biosynthesis</keyword>
<keyword id="KW-0443">Lipid metabolism</keyword>
<keyword id="KW-0547">Nucleotide-binding</keyword>
<keyword id="KW-0808">Transferase</keyword>
<feature type="chain" id="PRO_1000134744" description="Tetraacyldisaccharide 4'-kinase">
    <location>
        <begin position="1"/>
        <end position="327"/>
    </location>
</feature>
<feature type="binding site" evidence="1">
    <location>
        <begin position="52"/>
        <end position="59"/>
    </location>
    <ligand>
        <name>ATP</name>
        <dbReference type="ChEBI" id="CHEBI:30616"/>
    </ligand>
</feature>
<name>LPXK_METEP</name>
<dbReference type="EC" id="2.7.1.130" evidence="1"/>
<dbReference type="EMBL" id="CP000908">
    <property type="protein sequence ID" value="ABY31358.1"/>
    <property type="molecule type" value="Genomic_DNA"/>
</dbReference>
<dbReference type="RefSeq" id="WP_012254296.1">
    <property type="nucleotide sequence ID" value="NC_010172.1"/>
</dbReference>
<dbReference type="SMR" id="A9W6S6"/>
<dbReference type="KEGG" id="mex:Mext_2969"/>
<dbReference type="eggNOG" id="COG1663">
    <property type="taxonomic scope" value="Bacteria"/>
</dbReference>
<dbReference type="HOGENOM" id="CLU_038816_0_0_5"/>
<dbReference type="BioCyc" id="MEXT419610:MEXT_RS14950-MONOMER"/>
<dbReference type="UniPathway" id="UPA00359">
    <property type="reaction ID" value="UER00482"/>
</dbReference>
<dbReference type="GO" id="GO:0005886">
    <property type="term" value="C:plasma membrane"/>
    <property type="evidence" value="ECO:0007669"/>
    <property type="project" value="TreeGrafter"/>
</dbReference>
<dbReference type="GO" id="GO:0005524">
    <property type="term" value="F:ATP binding"/>
    <property type="evidence" value="ECO:0007669"/>
    <property type="project" value="UniProtKB-UniRule"/>
</dbReference>
<dbReference type="GO" id="GO:0009029">
    <property type="term" value="F:tetraacyldisaccharide 4'-kinase activity"/>
    <property type="evidence" value="ECO:0007669"/>
    <property type="project" value="UniProtKB-UniRule"/>
</dbReference>
<dbReference type="GO" id="GO:0009245">
    <property type="term" value="P:lipid A biosynthetic process"/>
    <property type="evidence" value="ECO:0007669"/>
    <property type="project" value="UniProtKB-UniRule"/>
</dbReference>
<dbReference type="GO" id="GO:0009244">
    <property type="term" value="P:lipopolysaccharide core region biosynthetic process"/>
    <property type="evidence" value="ECO:0007669"/>
    <property type="project" value="TreeGrafter"/>
</dbReference>
<dbReference type="HAMAP" id="MF_00409">
    <property type="entry name" value="LpxK"/>
    <property type="match status" value="1"/>
</dbReference>
<dbReference type="InterPro" id="IPR003758">
    <property type="entry name" value="LpxK"/>
</dbReference>
<dbReference type="InterPro" id="IPR027417">
    <property type="entry name" value="P-loop_NTPase"/>
</dbReference>
<dbReference type="NCBIfam" id="TIGR00682">
    <property type="entry name" value="lpxK"/>
    <property type="match status" value="1"/>
</dbReference>
<dbReference type="PANTHER" id="PTHR42724">
    <property type="entry name" value="TETRAACYLDISACCHARIDE 4'-KINASE"/>
    <property type="match status" value="1"/>
</dbReference>
<dbReference type="PANTHER" id="PTHR42724:SF1">
    <property type="entry name" value="TETRAACYLDISACCHARIDE 4'-KINASE, MITOCHONDRIAL-RELATED"/>
    <property type="match status" value="1"/>
</dbReference>
<dbReference type="Pfam" id="PF02606">
    <property type="entry name" value="LpxK"/>
    <property type="match status" value="1"/>
</dbReference>
<dbReference type="SUPFAM" id="SSF52540">
    <property type="entry name" value="P-loop containing nucleoside triphosphate hydrolases"/>
    <property type="match status" value="1"/>
</dbReference>
<proteinExistence type="inferred from homology"/>
<organism>
    <name type="scientific">Methylorubrum extorquens (strain PA1)</name>
    <name type="common">Methylobacterium extorquens</name>
    <dbReference type="NCBI Taxonomy" id="419610"/>
    <lineage>
        <taxon>Bacteria</taxon>
        <taxon>Pseudomonadati</taxon>
        <taxon>Pseudomonadota</taxon>
        <taxon>Alphaproteobacteria</taxon>
        <taxon>Hyphomicrobiales</taxon>
        <taxon>Methylobacteriaceae</taxon>
        <taxon>Methylorubrum</taxon>
    </lineage>
</organism>
<evidence type="ECO:0000255" key="1">
    <source>
        <dbReference type="HAMAP-Rule" id="MF_00409"/>
    </source>
</evidence>